<comment type="function">
    <text evidence="1">Catalyzes the conversion of uracil and 5-phospho-alpha-D-ribose 1-diphosphate (PRPP) to UMP and diphosphate.</text>
</comment>
<comment type="catalytic activity">
    <reaction evidence="1">
        <text>UMP + diphosphate = 5-phospho-alpha-D-ribose 1-diphosphate + uracil</text>
        <dbReference type="Rhea" id="RHEA:13017"/>
        <dbReference type="ChEBI" id="CHEBI:17568"/>
        <dbReference type="ChEBI" id="CHEBI:33019"/>
        <dbReference type="ChEBI" id="CHEBI:57865"/>
        <dbReference type="ChEBI" id="CHEBI:58017"/>
        <dbReference type="EC" id="2.4.2.9"/>
    </reaction>
</comment>
<comment type="cofactor">
    <cofactor evidence="1">
        <name>Mg(2+)</name>
        <dbReference type="ChEBI" id="CHEBI:18420"/>
    </cofactor>
    <text evidence="1">Binds 1 Mg(2+) ion per subunit. The magnesium is bound as Mg-PRPP.</text>
</comment>
<comment type="activity regulation">
    <text evidence="1">Allosterically activated by GTP.</text>
</comment>
<comment type="pathway">
    <text evidence="1">Pyrimidine metabolism; UMP biosynthesis via salvage pathway; UMP from uracil: step 1/1.</text>
</comment>
<comment type="similarity">
    <text evidence="1">Belongs to the UPRTase family.</text>
</comment>
<protein>
    <recommendedName>
        <fullName evidence="1">Uracil phosphoribosyltransferase</fullName>
        <ecNumber evidence="1">2.4.2.9</ecNumber>
    </recommendedName>
    <alternativeName>
        <fullName evidence="1">UMP pyrophosphorylase</fullName>
    </alternativeName>
    <alternativeName>
        <fullName evidence="1">UPRTase</fullName>
    </alternativeName>
</protein>
<evidence type="ECO:0000255" key="1">
    <source>
        <dbReference type="HAMAP-Rule" id="MF_01218"/>
    </source>
</evidence>
<feature type="chain" id="PRO_1000053699" description="Uracil phosphoribosyltransferase">
    <location>
        <begin position="1"/>
        <end position="209"/>
    </location>
</feature>
<feature type="binding site" evidence="1">
    <location>
        <position position="79"/>
    </location>
    <ligand>
        <name>5-phospho-alpha-D-ribose 1-diphosphate</name>
        <dbReference type="ChEBI" id="CHEBI:58017"/>
    </ligand>
</feature>
<feature type="binding site" evidence="1">
    <location>
        <position position="104"/>
    </location>
    <ligand>
        <name>5-phospho-alpha-D-ribose 1-diphosphate</name>
        <dbReference type="ChEBI" id="CHEBI:58017"/>
    </ligand>
</feature>
<feature type="binding site" evidence="1">
    <location>
        <begin position="131"/>
        <end position="139"/>
    </location>
    <ligand>
        <name>5-phospho-alpha-D-ribose 1-diphosphate</name>
        <dbReference type="ChEBI" id="CHEBI:58017"/>
    </ligand>
</feature>
<feature type="binding site" evidence="1">
    <location>
        <position position="194"/>
    </location>
    <ligand>
        <name>uracil</name>
        <dbReference type="ChEBI" id="CHEBI:17568"/>
    </ligand>
</feature>
<feature type="binding site" evidence="1">
    <location>
        <begin position="199"/>
        <end position="201"/>
    </location>
    <ligand>
        <name>uracil</name>
        <dbReference type="ChEBI" id="CHEBI:17568"/>
    </ligand>
</feature>
<feature type="binding site" evidence="1">
    <location>
        <position position="200"/>
    </location>
    <ligand>
        <name>5-phospho-alpha-D-ribose 1-diphosphate</name>
        <dbReference type="ChEBI" id="CHEBI:58017"/>
    </ligand>
</feature>
<proteinExistence type="inferred from homology"/>
<dbReference type="EC" id="2.4.2.9" evidence="1"/>
<dbReference type="EMBL" id="CP000285">
    <property type="protein sequence ID" value="ABE59446.1"/>
    <property type="molecule type" value="Genomic_DNA"/>
</dbReference>
<dbReference type="RefSeq" id="WP_011507392.1">
    <property type="nucleotide sequence ID" value="NC_007963.1"/>
</dbReference>
<dbReference type="SMR" id="Q1QVR2"/>
<dbReference type="STRING" id="290398.Csal_2095"/>
<dbReference type="GeneID" id="95334810"/>
<dbReference type="KEGG" id="csa:Csal_2095"/>
<dbReference type="eggNOG" id="COG0035">
    <property type="taxonomic scope" value="Bacteria"/>
</dbReference>
<dbReference type="HOGENOM" id="CLU_067096_2_2_6"/>
<dbReference type="OrthoDB" id="9781675at2"/>
<dbReference type="UniPathway" id="UPA00574">
    <property type="reaction ID" value="UER00636"/>
</dbReference>
<dbReference type="Proteomes" id="UP000000239">
    <property type="component" value="Chromosome"/>
</dbReference>
<dbReference type="GO" id="GO:0005525">
    <property type="term" value="F:GTP binding"/>
    <property type="evidence" value="ECO:0007669"/>
    <property type="project" value="UniProtKB-KW"/>
</dbReference>
<dbReference type="GO" id="GO:0000287">
    <property type="term" value="F:magnesium ion binding"/>
    <property type="evidence" value="ECO:0007669"/>
    <property type="project" value="UniProtKB-UniRule"/>
</dbReference>
<dbReference type="GO" id="GO:0004845">
    <property type="term" value="F:uracil phosphoribosyltransferase activity"/>
    <property type="evidence" value="ECO:0007669"/>
    <property type="project" value="UniProtKB-UniRule"/>
</dbReference>
<dbReference type="GO" id="GO:0044206">
    <property type="term" value="P:UMP salvage"/>
    <property type="evidence" value="ECO:0007669"/>
    <property type="project" value="UniProtKB-UniRule"/>
</dbReference>
<dbReference type="GO" id="GO:0006223">
    <property type="term" value="P:uracil salvage"/>
    <property type="evidence" value="ECO:0007669"/>
    <property type="project" value="InterPro"/>
</dbReference>
<dbReference type="CDD" id="cd06223">
    <property type="entry name" value="PRTases_typeI"/>
    <property type="match status" value="1"/>
</dbReference>
<dbReference type="FunFam" id="3.40.50.2020:FF:000003">
    <property type="entry name" value="Uracil phosphoribosyltransferase"/>
    <property type="match status" value="1"/>
</dbReference>
<dbReference type="Gene3D" id="3.40.50.2020">
    <property type="match status" value="1"/>
</dbReference>
<dbReference type="HAMAP" id="MF_01218_B">
    <property type="entry name" value="Upp_B"/>
    <property type="match status" value="1"/>
</dbReference>
<dbReference type="InterPro" id="IPR000836">
    <property type="entry name" value="PRibTrfase_dom"/>
</dbReference>
<dbReference type="InterPro" id="IPR029057">
    <property type="entry name" value="PRTase-like"/>
</dbReference>
<dbReference type="InterPro" id="IPR034332">
    <property type="entry name" value="Upp_B"/>
</dbReference>
<dbReference type="InterPro" id="IPR050054">
    <property type="entry name" value="UPRTase/APRTase"/>
</dbReference>
<dbReference type="InterPro" id="IPR005765">
    <property type="entry name" value="Ura_phspho_trans"/>
</dbReference>
<dbReference type="NCBIfam" id="NF001097">
    <property type="entry name" value="PRK00129.1"/>
    <property type="match status" value="1"/>
</dbReference>
<dbReference type="NCBIfam" id="TIGR01091">
    <property type="entry name" value="upp"/>
    <property type="match status" value="1"/>
</dbReference>
<dbReference type="PANTHER" id="PTHR32315">
    <property type="entry name" value="ADENINE PHOSPHORIBOSYLTRANSFERASE"/>
    <property type="match status" value="1"/>
</dbReference>
<dbReference type="PANTHER" id="PTHR32315:SF4">
    <property type="entry name" value="URACIL PHOSPHORIBOSYLTRANSFERASE, CHLOROPLASTIC"/>
    <property type="match status" value="1"/>
</dbReference>
<dbReference type="Pfam" id="PF14681">
    <property type="entry name" value="UPRTase"/>
    <property type="match status" value="1"/>
</dbReference>
<dbReference type="SUPFAM" id="SSF53271">
    <property type="entry name" value="PRTase-like"/>
    <property type="match status" value="1"/>
</dbReference>
<organism>
    <name type="scientific">Chromohalobacter salexigens (strain ATCC BAA-138 / DSM 3043 / CIP 106854 / NCIMB 13768 / 1H11)</name>
    <dbReference type="NCBI Taxonomy" id="290398"/>
    <lineage>
        <taxon>Bacteria</taxon>
        <taxon>Pseudomonadati</taxon>
        <taxon>Pseudomonadota</taxon>
        <taxon>Gammaproteobacteria</taxon>
        <taxon>Oceanospirillales</taxon>
        <taxon>Halomonadaceae</taxon>
        <taxon>Chromohalobacter</taxon>
    </lineage>
</organism>
<keyword id="KW-0021">Allosteric enzyme</keyword>
<keyword id="KW-0328">Glycosyltransferase</keyword>
<keyword id="KW-0342">GTP-binding</keyword>
<keyword id="KW-0460">Magnesium</keyword>
<keyword id="KW-0547">Nucleotide-binding</keyword>
<keyword id="KW-1185">Reference proteome</keyword>
<keyword id="KW-0808">Transferase</keyword>
<gene>
    <name evidence="1" type="primary">upp</name>
    <name type="ordered locus">Csal_2095</name>
</gene>
<name>UPP_CHRSD</name>
<reference key="1">
    <citation type="journal article" date="2011" name="Stand. Genomic Sci.">
        <title>Complete genome sequence of the halophilic and highly halotolerant Chromohalobacter salexigens type strain (1H11(T)).</title>
        <authorList>
            <person name="Copeland A."/>
            <person name="O'Connor K."/>
            <person name="Lucas S."/>
            <person name="Lapidus A."/>
            <person name="Berry K.W."/>
            <person name="Detter J.C."/>
            <person name="Del Rio T.G."/>
            <person name="Hammon N."/>
            <person name="Dalin E."/>
            <person name="Tice H."/>
            <person name="Pitluck S."/>
            <person name="Bruce D."/>
            <person name="Goodwin L."/>
            <person name="Han C."/>
            <person name="Tapia R."/>
            <person name="Saunders E."/>
            <person name="Schmutz J."/>
            <person name="Brettin T."/>
            <person name="Larimer F."/>
            <person name="Land M."/>
            <person name="Hauser L."/>
            <person name="Vargas C."/>
            <person name="Nieto J.J."/>
            <person name="Kyrpides N.C."/>
            <person name="Ivanova N."/>
            <person name="Goker M."/>
            <person name="Klenk H.P."/>
            <person name="Csonka L.N."/>
            <person name="Woyke T."/>
        </authorList>
    </citation>
    <scope>NUCLEOTIDE SEQUENCE [LARGE SCALE GENOMIC DNA]</scope>
    <source>
        <strain>ATCC BAA-138 / DSM 3043 / CIP 106854 / NCIMB 13768 / 1H11</strain>
    </source>
</reference>
<accession>Q1QVR2</accession>
<sequence>MSVHAIQHPLVKHKLGLMREAGISTKSFRELASEVAKLLTYEATQDLETQKTEIPGWSGEMLEVELLKGKKVTVVPILRAGLGMLDGVTDLIPSARVSVVGLYRNEETLEPVPYFEKFVGDLDERLAIVIDPMLATGGSMVATLDMLKARGCPLVKVIVLVAAPEGIARVQEAYPDVEIYTASIDERLDENGYIVPGLGDAGDKIFGTR</sequence>